<comment type="function">
    <text>May be an angiogenesis inhibitor.</text>
</comment>
<comment type="interaction">
    <interactant intactId="EBI-10306119">
        <id>Q9H2S6</id>
    </interactant>
    <interactant intactId="EBI-8649725">
        <id>Q9BSE2</id>
        <label>TMEM79</label>
    </interactant>
    <organismsDiffer>false</organismsDiffer>
    <experiments>4</experiments>
</comment>
<comment type="interaction">
    <interactant intactId="EBI-12003398">
        <id>Q9H2S6-2</id>
    </interactant>
    <interactant intactId="EBI-19125216">
        <id>Q86WK6</id>
        <label>AMIGO1</label>
    </interactant>
    <organismsDiffer>false</organismsDiffer>
    <experiments>3</experiments>
</comment>
<comment type="interaction">
    <interactant intactId="EBI-12003398">
        <id>Q9H2S6-2</id>
    </interactant>
    <interactant intactId="EBI-11343438">
        <id>Q3SXY8</id>
        <label>ARL13B</label>
    </interactant>
    <organismsDiffer>false</organismsDiffer>
    <experiments>3</experiments>
</comment>
<comment type="interaction">
    <interactant intactId="EBI-12003398">
        <id>Q9H2S6-2</id>
    </interactant>
    <interactant intactId="EBI-747430">
        <id>Q9BXK5</id>
        <label>BCL2L13</label>
    </interactant>
    <organismsDiffer>false</organismsDiffer>
    <experiments>3</experiments>
</comment>
<comment type="interaction">
    <interactant intactId="EBI-12003398">
        <id>Q9H2S6-2</id>
    </interactant>
    <interactant intactId="EBI-749464">
        <id>Q12983</id>
        <label>BNIP3</label>
    </interactant>
    <organismsDiffer>false</organismsDiffer>
    <experiments>3</experiments>
</comment>
<comment type="interaction">
    <interactant intactId="EBI-12003398">
        <id>Q9H2S6-2</id>
    </interactant>
    <interactant intactId="EBI-849893">
        <id>O60238</id>
        <label>BNIP3L</label>
    </interactant>
    <organismsDiffer>false</organismsDiffer>
    <experiments>3</experiments>
</comment>
<comment type="interaction">
    <interactant intactId="EBI-12003398">
        <id>Q9H2S6-2</id>
    </interactant>
    <interactant intactId="EBI-1049597">
        <id>P27797</id>
        <label>CALR</label>
    </interactant>
    <organismsDiffer>false</organismsDiffer>
    <experiments>3</experiments>
</comment>
<comment type="interaction">
    <interactant intactId="EBI-12003398">
        <id>Q9H2S6-2</id>
    </interactant>
    <interactant intactId="EBI-3906571">
        <id>P20138</id>
        <label>CD33</label>
    </interactant>
    <organismsDiffer>false</organismsDiffer>
    <experiments>3</experiments>
</comment>
<comment type="interaction">
    <interactant intactId="EBI-12003398">
        <id>Q9H2S6-2</id>
    </interactant>
    <interactant intactId="EBI-6942903">
        <id>Q96BA8</id>
        <label>CREB3L1</label>
    </interactant>
    <organismsDiffer>false</organismsDiffer>
    <experiments>3</experiments>
</comment>
<comment type="interaction">
    <interactant intactId="EBI-12003398">
        <id>Q9H2S6-2</id>
    </interactant>
    <interactant intactId="EBI-351007">
        <id>P36957</id>
        <label>DLST</label>
    </interactant>
    <organismsDiffer>false</organismsDiffer>
    <experiments>3</experiments>
</comment>
<comment type="interaction">
    <interactant intactId="EBI-12003398">
        <id>Q9H2S6-2</id>
    </interactant>
    <interactant intactId="EBI-18304435">
        <id>Q5JX71</id>
        <label>FAM209A</label>
    </interactant>
    <organismsDiffer>false</organismsDiffer>
    <experiments>3</experiments>
</comment>
<comment type="interaction">
    <interactant intactId="EBI-12003398">
        <id>Q9H2S6-2</id>
    </interactant>
    <interactant intactId="EBI-2869867">
        <id>P12314</id>
        <label>FCGR1A</label>
    </interactant>
    <organismsDiffer>false</organismsDiffer>
    <experiments>3</experiments>
</comment>
<comment type="interaction">
    <interactant intactId="EBI-12003398">
        <id>Q9H2S6-2</id>
    </interactant>
    <interactant intactId="EBI-2868927">
        <id>Q6P531</id>
        <label>GGT6</label>
    </interactant>
    <organismsDiffer>false</organismsDiffer>
    <experiments>3</experiments>
</comment>
<comment type="interaction">
    <interactant intactId="EBI-12003398">
        <id>Q9H2S6-2</id>
    </interactant>
    <interactant intactId="EBI-2867874">
        <id>Q9UM44</id>
        <label>HHLA2</label>
    </interactant>
    <organismsDiffer>false</organismsDiffer>
    <experiments>3</experiments>
</comment>
<comment type="interaction">
    <interactant intactId="EBI-12003398">
        <id>Q9H2S6-2</id>
    </interactant>
    <interactant intactId="EBI-17272405">
        <id>Q8N743</id>
        <label>KIR3DL3</label>
    </interactant>
    <organismsDiffer>false</organismsDiffer>
    <experiments>3</experiments>
</comment>
<comment type="interaction">
    <interactant intactId="EBI-12003398">
        <id>Q9H2S6-2</id>
    </interactant>
    <interactant intactId="EBI-709754">
        <id>Q9HB07</id>
        <label>MYG1</label>
    </interactant>
    <organismsDiffer>false</organismsDiffer>
    <experiments>3</experiments>
</comment>
<comment type="interaction">
    <interactant intactId="EBI-12003398">
        <id>Q9H2S6-2</id>
    </interactant>
    <interactant intactId="EBI-1055945">
        <id>Q8TDX7</id>
        <label>NEK7</label>
    </interactant>
    <organismsDiffer>false</organismsDiffer>
    <experiments>3</experiments>
</comment>
<comment type="interaction">
    <interactant intactId="EBI-12003398">
        <id>Q9H2S6-2</id>
    </interactant>
    <interactant intactId="EBI-10819434">
        <id>Q9NPE6</id>
        <label>SPAG4</label>
    </interactant>
    <organismsDiffer>false</organismsDiffer>
    <experiments>3</experiments>
</comment>
<comment type="interaction">
    <interactant intactId="EBI-12003398">
        <id>Q9H2S6-2</id>
    </interactant>
    <interactant intactId="EBI-3915978">
        <id>Q96A25</id>
        <label>TMEM106A</label>
    </interactant>
    <organismsDiffer>false</organismsDiffer>
    <experiments>3</experiments>
</comment>
<comment type="interaction">
    <interactant intactId="EBI-12003398">
        <id>Q9H2S6-2</id>
    </interactant>
    <interactant intactId="EBI-8649725">
        <id>Q9BSE2</id>
        <label>TMEM79</label>
    </interactant>
    <organismsDiffer>false</organismsDiffer>
    <experiments>3</experiments>
</comment>
<comment type="subcellular location">
    <molecule>Isoform 1</molecule>
    <subcellularLocation>
        <location evidence="8">Membrane</location>
        <topology evidence="8">Single-pass type II membrane protein</topology>
    </subcellularLocation>
    <subcellularLocation>
        <location>Nucleus envelope</location>
    </subcellularLocation>
</comment>
<comment type="subcellular location">
    <molecule>Isoform 2</molecule>
    <subcellularLocation>
        <location evidence="8">Membrane</location>
        <topology evidence="8">Single-pass type II membrane protein</topology>
    </subcellularLocation>
    <subcellularLocation>
        <location>Nucleus envelope</location>
    </subcellularLocation>
</comment>
<comment type="subcellular location">
    <molecule>Isoform 3</molecule>
    <subcellularLocation>
        <location>Cytoplasm</location>
    </subcellularLocation>
</comment>
<comment type="alternative products">
    <event type="alternative splicing"/>
    <isoform>
        <id>Q9H2S6-1</id>
        <name>1</name>
        <name>64kDa</name>
        <name>I</name>
        <sequence type="displayed"/>
    </isoform>
    <isoform>
        <id>Q9H2S6-2</id>
        <name>2</name>
        <name>33 kDa</name>
        <name>II</name>
        <sequence type="described" ref="VSP_054950 VSP_054951"/>
    </isoform>
    <isoform>
        <id>Q9H2S6-3</id>
        <name>3</name>
        <name>45kDa</name>
        <name>III</name>
        <sequence type="described" ref="VSP_054949"/>
    </isoform>
</comment>
<comment type="tissue specificity">
    <text evidence="5 6 7">Highly expressed in hypovascular connective tissues such as tendons. Also has strong expression in adipose tissue.</text>
</comment>
<comment type="similarity">
    <text evidence="8">Belongs to the chondromodulin-1 family.</text>
</comment>
<accession>Q9H2S6</accession>
<accession>Q9HBX0</accession>
<accession>Q9UJG0</accession>
<dbReference type="EMBL" id="AB055421">
    <property type="protein sequence ID" value="BAB21756.1"/>
    <property type="molecule type" value="mRNA"/>
</dbReference>
<dbReference type="EMBL" id="AF234259">
    <property type="protein sequence ID" value="AAG49144.1"/>
    <property type="molecule type" value="mRNA"/>
</dbReference>
<dbReference type="EMBL" id="AF191770">
    <property type="protein sequence ID" value="AAG28395.1"/>
    <property type="molecule type" value="mRNA"/>
</dbReference>
<dbReference type="EMBL" id="AF291656">
    <property type="protein sequence ID" value="AAK83109.1"/>
    <property type="molecule type" value="mRNA"/>
</dbReference>
<dbReference type="EMBL" id="AY358706">
    <property type="protein sequence ID" value="AAQ89069.1"/>
    <property type="molecule type" value="mRNA"/>
</dbReference>
<dbReference type="EMBL" id="AL035608">
    <property type="status" value="NOT_ANNOTATED_CDS"/>
    <property type="molecule type" value="Genomic_DNA"/>
</dbReference>
<dbReference type="CCDS" id="CCDS14469.1">
    <molecule id="Q9H2S6-1"/>
</dbReference>
<dbReference type="PIR" id="JC7597">
    <property type="entry name" value="JC7597"/>
</dbReference>
<dbReference type="RefSeq" id="NP_071427.2">
    <molecule id="Q9H2S6-1"/>
    <property type="nucleotide sequence ID" value="NM_022144.3"/>
</dbReference>
<dbReference type="BioGRID" id="122062">
    <property type="interactions" value="18"/>
</dbReference>
<dbReference type="FunCoup" id="Q9H2S6">
    <property type="interactions" value="9"/>
</dbReference>
<dbReference type="IntAct" id="Q9H2S6">
    <property type="interactions" value="20"/>
</dbReference>
<dbReference type="STRING" id="9606.ENSP00000362122"/>
<dbReference type="GlyCosmos" id="Q9H2S6">
    <property type="glycosylation" value="2 sites, No reported glycans"/>
</dbReference>
<dbReference type="GlyGen" id="Q9H2S6">
    <property type="glycosylation" value="3 sites, 1 N-linked glycan (1 site), 1 O-linked glycan (1 site)"/>
</dbReference>
<dbReference type="iPTMnet" id="Q9H2S6"/>
<dbReference type="PhosphoSitePlus" id="Q9H2S6"/>
<dbReference type="BioMuta" id="TNMD"/>
<dbReference type="DMDM" id="18202941"/>
<dbReference type="MassIVE" id="Q9H2S6"/>
<dbReference type="PaxDb" id="9606-ENSP00000362122"/>
<dbReference type="PeptideAtlas" id="Q9H2S6"/>
<dbReference type="ProteomicsDB" id="80587">
    <molecule id="Q9H2S6-1"/>
</dbReference>
<dbReference type="Antibodypedia" id="28504">
    <property type="antibodies" value="169 antibodies from 23 providers"/>
</dbReference>
<dbReference type="DNASU" id="64102"/>
<dbReference type="Ensembl" id="ENST00000373031.5">
    <molecule id="Q9H2S6-1"/>
    <property type="protein sequence ID" value="ENSP00000362122.4"/>
    <property type="gene ID" value="ENSG00000000005.6"/>
</dbReference>
<dbReference type="GeneID" id="64102"/>
<dbReference type="KEGG" id="hsa:64102"/>
<dbReference type="MANE-Select" id="ENST00000373031.5">
    <property type="protein sequence ID" value="ENSP00000362122.4"/>
    <property type="RefSeq nucleotide sequence ID" value="NM_022144.3"/>
    <property type="RefSeq protein sequence ID" value="NP_071427.2"/>
</dbReference>
<dbReference type="UCSC" id="uc004efy.5">
    <molecule id="Q9H2S6-1"/>
    <property type="organism name" value="human"/>
</dbReference>
<dbReference type="AGR" id="HGNC:17757"/>
<dbReference type="CTD" id="64102"/>
<dbReference type="DisGeNET" id="64102"/>
<dbReference type="GeneCards" id="TNMD"/>
<dbReference type="HGNC" id="HGNC:17757">
    <property type="gene designation" value="TNMD"/>
</dbReference>
<dbReference type="HPA" id="ENSG00000000005">
    <property type="expression patterns" value="Tissue enhanced (adipose tissue, breast, seminal vesicle)"/>
</dbReference>
<dbReference type="MIM" id="300459">
    <property type="type" value="gene"/>
</dbReference>
<dbReference type="neXtProt" id="NX_Q9H2S6"/>
<dbReference type="OpenTargets" id="ENSG00000000005"/>
<dbReference type="PharmGKB" id="PA134878561"/>
<dbReference type="VEuPathDB" id="HostDB:ENSG00000000005"/>
<dbReference type="eggNOG" id="ENOG502QPTP">
    <property type="taxonomic scope" value="Eukaryota"/>
</dbReference>
<dbReference type="GeneTree" id="ENSGT00480000042679"/>
<dbReference type="HOGENOM" id="CLU_071852_1_0_1"/>
<dbReference type="InParanoid" id="Q9H2S6"/>
<dbReference type="OMA" id="TIYWIHP"/>
<dbReference type="OrthoDB" id="5985282at2759"/>
<dbReference type="PAN-GO" id="Q9H2S6">
    <property type="GO annotations" value="2 GO annotations based on evolutionary models"/>
</dbReference>
<dbReference type="PhylomeDB" id="Q9H2S6"/>
<dbReference type="TreeFam" id="TF329712"/>
<dbReference type="PathwayCommons" id="Q9H2S6"/>
<dbReference type="SignaLink" id="Q9H2S6"/>
<dbReference type="BioGRID-ORCS" id="64102">
    <property type="hits" value="9 hits in 762 CRISPR screens"/>
</dbReference>
<dbReference type="ChiTaRS" id="TNMD">
    <property type="organism name" value="human"/>
</dbReference>
<dbReference type="GeneWiki" id="TNMD"/>
<dbReference type="GenomeRNAi" id="64102"/>
<dbReference type="Pharos" id="Q9H2S6">
    <property type="development level" value="Tbio"/>
</dbReference>
<dbReference type="PRO" id="PR:Q9H2S6"/>
<dbReference type="Proteomes" id="UP000005640">
    <property type="component" value="Chromosome X"/>
</dbReference>
<dbReference type="RNAct" id="Q9H2S6">
    <property type="molecule type" value="protein"/>
</dbReference>
<dbReference type="Bgee" id="ENSG00000000005">
    <property type="expression patterns" value="Expressed in calcaneal tendon and 102 other cell types or tissues"/>
</dbReference>
<dbReference type="GO" id="GO:0005737">
    <property type="term" value="C:cytoplasm"/>
    <property type="evidence" value="ECO:0007669"/>
    <property type="project" value="UniProtKB-SubCell"/>
</dbReference>
<dbReference type="GO" id="GO:0016020">
    <property type="term" value="C:membrane"/>
    <property type="evidence" value="ECO:0007669"/>
    <property type="project" value="UniProtKB-SubCell"/>
</dbReference>
<dbReference type="GO" id="GO:0005635">
    <property type="term" value="C:nuclear envelope"/>
    <property type="evidence" value="ECO:0007669"/>
    <property type="project" value="UniProtKB-SubCell"/>
</dbReference>
<dbReference type="GO" id="GO:0001886">
    <property type="term" value="P:endothelial cell morphogenesis"/>
    <property type="evidence" value="ECO:0007669"/>
    <property type="project" value="Ensembl"/>
</dbReference>
<dbReference type="GO" id="GO:0016525">
    <property type="term" value="P:negative regulation of angiogenesis"/>
    <property type="evidence" value="ECO:0000318"/>
    <property type="project" value="GO_Central"/>
</dbReference>
<dbReference type="GO" id="GO:0001937">
    <property type="term" value="P:negative regulation of endothelial cell proliferation"/>
    <property type="evidence" value="ECO:0000318"/>
    <property type="project" value="GO_Central"/>
</dbReference>
<dbReference type="InterPro" id="IPR007084">
    <property type="entry name" value="BRICHOS_dom"/>
</dbReference>
<dbReference type="InterPro" id="IPR043405">
    <property type="entry name" value="Chondromodulin/Tenomodulin"/>
</dbReference>
<dbReference type="PANTHER" id="PTHR14064">
    <property type="entry name" value="CHONDROMODULIN-RELATED"/>
    <property type="match status" value="1"/>
</dbReference>
<dbReference type="PANTHER" id="PTHR14064:SF3">
    <property type="entry name" value="TENOMODULIN"/>
    <property type="match status" value="1"/>
</dbReference>
<dbReference type="Pfam" id="PF04089">
    <property type="entry name" value="BRICHOS"/>
    <property type="match status" value="1"/>
</dbReference>
<dbReference type="SMART" id="SM01039">
    <property type="entry name" value="BRICHOS"/>
    <property type="match status" value="1"/>
</dbReference>
<dbReference type="PROSITE" id="PS50869">
    <property type="entry name" value="BRICHOS"/>
    <property type="match status" value="1"/>
</dbReference>
<sequence>MAKNPPENCEDCHILNAEAFKSKKICKSLKICGLVFGILALTLIVLFWGSKHFWPEVPKKAYDMEHTFYSNGEKKKIYMEIDPVTRTEIFRSGNGTDETLEVHDFKNGYTGIYFVGLQKCFIKTQIKVIPEFSEPEEEIDENEEITTTFFEQSVIWVPAEKPIENRDFLKNSKILEICDNVTMYWINPTLISVSELQDFEEEGEDLHFPANEKKGIEQNEQWVVPQVKVEKTRHARQASEEELPINDYTENGIEFDPMLDERGYCCIYCRRGNRYCRRVCEPLLGYYPYPYCYQGGRVICRVIMPCNWWVARMLGRV</sequence>
<evidence type="ECO:0000250" key="1"/>
<evidence type="ECO:0000250" key="2">
    <source>
        <dbReference type="UniProtKB" id="Q9ESC2"/>
    </source>
</evidence>
<evidence type="ECO:0000255" key="3"/>
<evidence type="ECO:0000255" key="4">
    <source>
        <dbReference type="PROSITE-ProRule" id="PRU00255"/>
    </source>
</evidence>
<evidence type="ECO:0000269" key="5">
    <source>
    </source>
</evidence>
<evidence type="ECO:0000269" key="6">
    <source>
    </source>
</evidence>
<evidence type="ECO:0000269" key="7">
    <source>
    </source>
</evidence>
<evidence type="ECO:0000305" key="8"/>
<keyword id="KW-0025">Alternative splicing</keyword>
<keyword id="KW-0963">Cytoplasm</keyword>
<keyword id="KW-1015">Disulfide bond</keyword>
<keyword id="KW-0325">Glycoprotein</keyword>
<keyword id="KW-0472">Membrane</keyword>
<keyword id="KW-0539">Nucleus</keyword>
<keyword id="KW-0597">Phosphoprotein</keyword>
<keyword id="KW-1267">Proteomics identification</keyword>
<keyword id="KW-1185">Reference proteome</keyword>
<keyword id="KW-0735">Signal-anchor</keyword>
<keyword id="KW-0812">Transmembrane</keyword>
<keyword id="KW-1133">Transmembrane helix</keyword>
<reference key="1">
    <citation type="journal article" date="2001" name="Biochem. Biophys. Res. Commun.">
        <title>Molecular cloning and characterization of ChM1L, a novel membrane molecule similar to chondromodulin-I.</title>
        <authorList>
            <person name="Yamana K."/>
            <person name="Wada H."/>
            <person name="Takahashi Y."/>
            <person name="Sato H."/>
            <person name="Kasahara Y."/>
            <person name="Kiyoki M."/>
        </authorList>
    </citation>
    <scope>NUCLEOTIDE SEQUENCE [MRNA]</scope>
</reference>
<reference key="2">
    <citation type="journal article" date="2001" name="Biochem. Biophys. Res. Commun.">
        <title>Molecular cloning of tenomodulin, a novel chondromodulin-I related gene.</title>
        <authorList>
            <person name="Shukunami C."/>
            <person name="Oshima Y."/>
            <person name="Hiraki Y."/>
        </authorList>
    </citation>
    <scope>NUCLEOTIDE SEQUENCE [MRNA]</scope>
</reference>
<reference key="3">
    <citation type="submission" date="1999-10" db="EMBL/GenBank/DDBJ databases">
        <title>Gene expression alterations revealed by suppression subtractive hybridization in rat soleus muscle disuse atrophy.</title>
        <authorList>
            <person name="Cros N."/>
            <person name="Tkatchenko A.V."/>
            <person name="Leclerc L."/>
            <person name="Leger J.J."/>
            <person name="Marini J.-F."/>
            <person name="Dechesne C.A."/>
        </authorList>
    </citation>
    <scope>NUCLEOTIDE SEQUENCE [MRNA]</scope>
    <source>
        <tissue>Skeletal muscle</tissue>
    </source>
</reference>
<reference key="4">
    <citation type="journal article" date="2001" name="Dev. Dyn.">
        <title>A novel gene, tendin, is strongly expressed in tendons and ligaments and shows high homology with chondromodulin-I.</title>
        <authorList>
            <person name="Brandau O."/>
            <person name="Meindl A."/>
            <person name="Faessler R."/>
            <person name="Aszodi A."/>
        </authorList>
    </citation>
    <scope>NUCLEOTIDE SEQUENCE [GENOMIC DNA]</scope>
</reference>
<reference key="5">
    <citation type="journal article" date="2003" name="Genome Res.">
        <title>The secreted protein discovery initiative (SPDI), a large-scale effort to identify novel human secreted and transmembrane proteins: a bioinformatics assessment.</title>
        <authorList>
            <person name="Clark H.F."/>
            <person name="Gurney A.L."/>
            <person name="Abaya E."/>
            <person name="Baker K."/>
            <person name="Baldwin D.T."/>
            <person name="Brush J."/>
            <person name="Chen J."/>
            <person name="Chow B."/>
            <person name="Chui C."/>
            <person name="Crowley C."/>
            <person name="Currell B."/>
            <person name="Deuel B."/>
            <person name="Dowd P."/>
            <person name="Eaton D."/>
            <person name="Foster J.S."/>
            <person name="Grimaldi C."/>
            <person name="Gu Q."/>
            <person name="Hass P.E."/>
            <person name="Heldens S."/>
            <person name="Huang A."/>
            <person name="Kim H.S."/>
            <person name="Klimowski L."/>
            <person name="Jin Y."/>
            <person name="Johnson S."/>
            <person name="Lee J."/>
            <person name="Lewis L."/>
            <person name="Liao D."/>
            <person name="Mark M.R."/>
            <person name="Robbie E."/>
            <person name="Sanchez C."/>
            <person name="Schoenfeld J."/>
            <person name="Seshagiri S."/>
            <person name="Simmons L."/>
            <person name="Singh J."/>
            <person name="Smith V."/>
            <person name="Stinson J."/>
            <person name="Vagts A."/>
            <person name="Vandlen R.L."/>
            <person name="Watanabe C."/>
            <person name="Wieand D."/>
            <person name="Woods K."/>
            <person name="Xie M.-H."/>
            <person name="Yansura D.G."/>
            <person name="Yi S."/>
            <person name="Yu G."/>
            <person name="Yuan J."/>
            <person name="Zhang M."/>
            <person name="Zhang Z."/>
            <person name="Goddard A.D."/>
            <person name="Wood W.I."/>
            <person name="Godowski P.J."/>
            <person name="Gray A.M."/>
        </authorList>
    </citation>
    <scope>NUCLEOTIDE SEQUENCE [LARGE SCALE MRNA]</scope>
</reference>
<reference key="6">
    <citation type="journal article" date="2005" name="Nature">
        <title>The DNA sequence of the human X chromosome.</title>
        <authorList>
            <person name="Ross M.T."/>
            <person name="Grafham D.V."/>
            <person name="Coffey A.J."/>
            <person name="Scherer S."/>
            <person name="McLay K."/>
            <person name="Muzny D."/>
            <person name="Platzer M."/>
            <person name="Howell G.R."/>
            <person name="Burrows C."/>
            <person name="Bird C.P."/>
            <person name="Frankish A."/>
            <person name="Lovell F.L."/>
            <person name="Howe K.L."/>
            <person name="Ashurst J.L."/>
            <person name="Fulton R.S."/>
            <person name="Sudbrak R."/>
            <person name="Wen G."/>
            <person name="Jones M.C."/>
            <person name="Hurles M.E."/>
            <person name="Andrews T.D."/>
            <person name="Scott C.E."/>
            <person name="Searle S."/>
            <person name="Ramser J."/>
            <person name="Whittaker A."/>
            <person name="Deadman R."/>
            <person name="Carter N.P."/>
            <person name="Hunt S.E."/>
            <person name="Chen R."/>
            <person name="Cree A."/>
            <person name="Gunaratne P."/>
            <person name="Havlak P."/>
            <person name="Hodgson A."/>
            <person name="Metzker M.L."/>
            <person name="Richards S."/>
            <person name="Scott G."/>
            <person name="Steffen D."/>
            <person name="Sodergren E."/>
            <person name="Wheeler D.A."/>
            <person name="Worley K.C."/>
            <person name="Ainscough R."/>
            <person name="Ambrose K.D."/>
            <person name="Ansari-Lari M.A."/>
            <person name="Aradhya S."/>
            <person name="Ashwell R.I."/>
            <person name="Babbage A.K."/>
            <person name="Bagguley C.L."/>
            <person name="Ballabio A."/>
            <person name="Banerjee R."/>
            <person name="Barker G.E."/>
            <person name="Barlow K.F."/>
            <person name="Barrett I.P."/>
            <person name="Bates K.N."/>
            <person name="Beare D.M."/>
            <person name="Beasley H."/>
            <person name="Beasley O."/>
            <person name="Beck A."/>
            <person name="Bethel G."/>
            <person name="Blechschmidt K."/>
            <person name="Brady N."/>
            <person name="Bray-Allen S."/>
            <person name="Bridgeman A.M."/>
            <person name="Brown A.J."/>
            <person name="Brown M.J."/>
            <person name="Bonnin D."/>
            <person name="Bruford E.A."/>
            <person name="Buhay C."/>
            <person name="Burch P."/>
            <person name="Burford D."/>
            <person name="Burgess J."/>
            <person name="Burrill W."/>
            <person name="Burton J."/>
            <person name="Bye J.M."/>
            <person name="Carder C."/>
            <person name="Carrel L."/>
            <person name="Chako J."/>
            <person name="Chapman J.C."/>
            <person name="Chavez D."/>
            <person name="Chen E."/>
            <person name="Chen G."/>
            <person name="Chen Y."/>
            <person name="Chen Z."/>
            <person name="Chinault C."/>
            <person name="Ciccodicola A."/>
            <person name="Clark S.Y."/>
            <person name="Clarke G."/>
            <person name="Clee C.M."/>
            <person name="Clegg S."/>
            <person name="Clerc-Blankenburg K."/>
            <person name="Clifford K."/>
            <person name="Cobley V."/>
            <person name="Cole C.G."/>
            <person name="Conquer J.S."/>
            <person name="Corby N."/>
            <person name="Connor R.E."/>
            <person name="David R."/>
            <person name="Davies J."/>
            <person name="Davis C."/>
            <person name="Davis J."/>
            <person name="Delgado O."/>
            <person name="Deshazo D."/>
            <person name="Dhami P."/>
            <person name="Ding Y."/>
            <person name="Dinh H."/>
            <person name="Dodsworth S."/>
            <person name="Draper H."/>
            <person name="Dugan-Rocha S."/>
            <person name="Dunham A."/>
            <person name="Dunn M."/>
            <person name="Durbin K.J."/>
            <person name="Dutta I."/>
            <person name="Eades T."/>
            <person name="Ellwood M."/>
            <person name="Emery-Cohen A."/>
            <person name="Errington H."/>
            <person name="Evans K.L."/>
            <person name="Faulkner L."/>
            <person name="Francis F."/>
            <person name="Frankland J."/>
            <person name="Fraser A.E."/>
            <person name="Galgoczy P."/>
            <person name="Gilbert J."/>
            <person name="Gill R."/>
            <person name="Gloeckner G."/>
            <person name="Gregory S.G."/>
            <person name="Gribble S."/>
            <person name="Griffiths C."/>
            <person name="Grocock R."/>
            <person name="Gu Y."/>
            <person name="Gwilliam R."/>
            <person name="Hamilton C."/>
            <person name="Hart E.A."/>
            <person name="Hawes A."/>
            <person name="Heath P.D."/>
            <person name="Heitmann K."/>
            <person name="Hennig S."/>
            <person name="Hernandez J."/>
            <person name="Hinzmann B."/>
            <person name="Ho S."/>
            <person name="Hoffs M."/>
            <person name="Howden P.J."/>
            <person name="Huckle E.J."/>
            <person name="Hume J."/>
            <person name="Hunt P.J."/>
            <person name="Hunt A.R."/>
            <person name="Isherwood J."/>
            <person name="Jacob L."/>
            <person name="Johnson D."/>
            <person name="Jones S."/>
            <person name="de Jong P.J."/>
            <person name="Joseph S.S."/>
            <person name="Keenan S."/>
            <person name="Kelly S."/>
            <person name="Kershaw J.K."/>
            <person name="Khan Z."/>
            <person name="Kioschis P."/>
            <person name="Klages S."/>
            <person name="Knights A.J."/>
            <person name="Kosiura A."/>
            <person name="Kovar-Smith C."/>
            <person name="Laird G.K."/>
            <person name="Langford C."/>
            <person name="Lawlor S."/>
            <person name="Leversha M."/>
            <person name="Lewis L."/>
            <person name="Liu W."/>
            <person name="Lloyd C."/>
            <person name="Lloyd D.M."/>
            <person name="Loulseged H."/>
            <person name="Loveland J.E."/>
            <person name="Lovell J.D."/>
            <person name="Lozado R."/>
            <person name="Lu J."/>
            <person name="Lyne R."/>
            <person name="Ma J."/>
            <person name="Maheshwari M."/>
            <person name="Matthews L.H."/>
            <person name="McDowall J."/>
            <person name="McLaren S."/>
            <person name="McMurray A."/>
            <person name="Meidl P."/>
            <person name="Meitinger T."/>
            <person name="Milne S."/>
            <person name="Miner G."/>
            <person name="Mistry S.L."/>
            <person name="Morgan M."/>
            <person name="Morris S."/>
            <person name="Mueller I."/>
            <person name="Mullikin J.C."/>
            <person name="Nguyen N."/>
            <person name="Nordsiek G."/>
            <person name="Nyakatura G."/>
            <person name="O'dell C.N."/>
            <person name="Okwuonu G."/>
            <person name="Palmer S."/>
            <person name="Pandian R."/>
            <person name="Parker D."/>
            <person name="Parrish J."/>
            <person name="Pasternak S."/>
            <person name="Patel D."/>
            <person name="Pearce A.V."/>
            <person name="Pearson D.M."/>
            <person name="Pelan S.E."/>
            <person name="Perez L."/>
            <person name="Porter K.M."/>
            <person name="Ramsey Y."/>
            <person name="Reichwald K."/>
            <person name="Rhodes S."/>
            <person name="Ridler K.A."/>
            <person name="Schlessinger D."/>
            <person name="Schueler M.G."/>
            <person name="Sehra H.K."/>
            <person name="Shaw-Smith C."/>
            <person name="Shen H."/>
            <person name="Sheridan E.M."/>
            <person name="Shownkeen R."/>
            <person name="Skuce C.D."/>
            <person name="Smith M.L."/>
            <person name="Sotheran E.C."/>
            <person name="Steingruber H.E."/>
            <person name="Steward C.A."/>
            <person name="Storey R."/>
            <person name="Swann R.M."/>
            <person name="Swarbreck D."/>
            <person name="Tabor P.E."/>
            <person name="Taudien S."/>
            <person name="Taylor T."/>
            <person name="Teague B."/>
            <person name="Thomas K."/>
            <person name="Thorpe A."/>
            <person name="Timms K."/>
            <person name="Tracey A."/>
            <person name="Trevanion S."/>
            <person name="Tromans A.C."/>
            <person name="d'Urso M."/>
            <person name="Verduzco D."/>
            <person name="Villasana D."/>
            <person name="Waldron L."/>
            <person name="Wall M."/>
            <person name="Wang Q."/>
            <person name="Warren J."/>
            <person name="Warry G.L."/>
            <person name="Wei X."/>
            <person name="West A."/>
            <person name="Whitehead S.L."/>
            <person name="Whiteley M.N."/>
            <person name="Wilkinson J.E."/>
            <person name="Willey D.L."/>
            <person name="Williams G."/>
            <person name="Williams L."/>
            <person name="Williamson A."/>
            <person name="Williamson H."/>
            <person name="Wilming L."/>
            <person name="Woodmansey R.L."/>
            <person name="Wray P.W."/>
            <person name="Yen J."/>
            <person name="Zhang J."/>
            <person name="Zhou J."/>
            <person name="Zoghbi H."/>
            <person name="Zorilla S."/>
            <person name="Buck D."/>
            <person name="Reinhardt R."/>
            <person name="Poustka A."/>
            <person name="Rosenthal A."/>
            <person name="Lehrach H."/>
            <person name="Meindl A."/>
            <person name="Minx P.J."/>
            <person name="Hillier L.W."/>
            <person name="Willard H.F."/>
            <person name="Wilson R.K."/>
            <person name="Waterston R.H."/>
            <person name="Rice C.M."/>
            <person name="Vaudin M."/>
            <person name="Coulson A."/>
            <person name="Nelson D.L."/>
            <person name="Weinstock G."/>
            <person name="Sulston J.E."/>
            <person name="Durbin R.M."/>
            <person name="Hubbard T."/>
            <person name="Gibbs R.A."/>
            <person name="Beck S."/>
            <person name="Rogers J."/>
            <person name="Bentley D.R."/>
        </authorList>
    </citation>
    <scope>NUCLEOTIDE SEQUENCE [LARGE SCALE GENOMIC DNA]</scope>
</reference>
<reference key="7">
    <citation type="journal article" date="2009" name="J. Clin. Endocrinol. Metab.">
        <title>Tenomodulin is highly expressed in adipose tissue, increased in obesity, and down-regulated during diet-induced weight loss.</title>
        <authorList>
            <person name="Saiki A."/>
            <person name="Olsson M."/>
            <person name="Jernas M."/>
            <person name="Gummesson A."/>
            <person name="McTernan P.G."/>
            <person name="Andersson J."/>
            <person name="Jacobson P."/>
            <person name="Sjoholm K."/>
            <person name="Olsson B."/>
            <person name="Yamamura S."/>
            <person name="Walley A."/>
            <person name="Froguel P."/>
            <person name="Carlsson B."/>
            <person name="Sjostrom L."/>
            <person name="Svensson P.A."/>
            <person name="Carlsson L.M."/>
        </authorList>
    </citation>
    <scope>TISSUE SPECIFICITY</scope>
</reference>
<reference key="8">
    <citation type="journal article" date="2010" name="J. Orthop. Res.">
        <title>Tendon-selective genes identified from rat and human musculoskeletal tissues.</title>
        <authorList>
            <person name="Jelinsky S.A."/>
            <person name="Archambault J."/>
            <person name="Li L."/>
            <person name="Seeherman H."/>
        </authorList>
    </citation>
    <scope>TISSUE SPECIFICITY</scope>
</reference>
<reference key="9">
    <citation type="journal article" date="2012" name="J. Appl. Physiol.">
        <title>Differential expression and cellular localization of novel isoforms of the tendon biomarker tenomodulin.</title>
        <authorList>
            <person name="Qi J."/>
            <person name="Dmochowski J.M."/>
            <person name="Banes A.N."/>
            <person name="Tsuzaki M."/>
            <person name="Bynum D."/>
            <person name="Patterson M."/>
            <person name="Creighton A."/>
            <person name="Gomez S."/>
            <person name="Tech K."/>
            <person name="Cederlund A."/>
            <person name="Banes A.J."/>
        </authorList>
    </citation>
    <scope>ALTERNATIVE SPLICING</scope>
    <scope>TISSUE SPECIFICITY</scope>
    <scope>SUBCELLULAR LOCATION</scope>
</reference>
<name>TNMD_HUMAN</name>
<feature type="chain" id="PRO_0000144308" description="Tenomodulin">
    <location>
        <begin position="1"/>
        <end position="317"/>
    </location>
</feature>
<feature type="topological domain" description="Cytoplasmic" evidence="3">
    <location>
        <begin position="1"/>
        <end position="30"/>
    </location>
</feature>
<feature type="transmembrane region" description="Helical; Signal-anchor for type II membrane protein" evidence="3">
    <location>
        <begin position="31"/>
        <end position="50"/>
    </location>
</feature>
<feature type="topological domain" description="Extracellular" evidence="3">
    <location>
        <begin position="51"/>
        <end position="317"/>
    </location>
</feature>
<feature type="domain" description="BRICHOS" evidence="4">
    <location>
        <begin position="93"/>
        <end position="186"/>
    </location>
</feature>
<feature type="modified residue" description="Phosphoserine" evidence="2">
    <location>
        <position position="239"/>
    </location>
</feature>
<feature type="glycosylation site" description="N-linked (GlcNAc...) asparagine" evidence="3">
    <location>
        <position position="94"/>
    </location>
</feature>
<feature type="glycosylation site" description="N-linked (GlcNAc...) asparagine" evidence="3">
    <location>
        <position position="180"/>
    </location>
</feature>
<feature type="disulfide bond" evidence="1">
    <location>
        <begin position="120"/>
        <end position="178"/>
    </location>
</feature>
<feature type="splice variant" id="VSP_054949" description="In isoform 3." evidence="8">
    <location>
        <begin position="1"/>
        <end position="63"/>
    </location>
</feature>
<feature type="splice variant" id="VSP_054950" description="In isoform 2." evidence="8">
    <original>VSELQDFEEEGEDLH</original>
    <variation>GMTFLSSSSSYFLRQ</variation>
    <location>
        <begin position="193"/>
        <end position="207"/>
    </location>
</feature>
<feature type="splice variant" id="VSP_054951" description="In isoform 2." evidence="8">
    <location>
        <begin position="208"/>
        <end position="317"/>
    </location>
</feature>
<feature type="sequence conflict" description="In Ref. 3; AAG28395." evidence="8" ref="3">
    <original>A</original>
    <variation>T</variation>
    <location>
        <position position="40"/>
    </location>
</feature>
<feature type="sequence conflict" description="In Ref. 3; AAG28395." evidence="8" ref="3">
    <original>N</original>
    <variation>S</variation>
    <location>
        <position position="71"/>
    </location>
</feature>
<organism>
    <name type="scientific">Homo sapiens</name>
    <name type="common">Human</name>
    <dbReference type="NCBI Taxonomy" id="9606"/>
    <lineage>
        <taxon>Eukaryota</taxon>
        <taxon>Metazoa</taxon>
        <taxon>Chordata</taxon>
        <taxon>Craniata</taxon>
        <taxon>Vertebrata</taxon>
        <taxon>Euteleostomi</taxon>
        <taxon>Mammalia</taxon>
        <taxon>Eutheria</taxon>
        <taxon>Euarchontoglires</taxon>
        <taxon>Primates</taxon>
        <taxon>Haplorrhini</taxon>
        <taxon>Catarrhini</taxon>
        <taxon>Hominidae</taxon>
        <taxon>Homo</taxon>
    </lineage>
</organism>
<gene>
    <name type="primary">TNMD</name>
    <name type="synonym">CHM1L</name>
    <name type="ORF">UNQ771/PRO1565</name>
</gene>
<protein>
    <recommendedName>
        <fullName>Tenomodulin</fullName>
        <shortName>TeM</shortName>
        <shortName>hTeM</shortName>
    </recommendedName>
    <alternativeName>
        <fullName>Chondromodulin-1-like protein</fullName>
        <shortName>ChM1L</shortName>
        <shortName>hChM1L</shortName>
    </alternativeName>
    <alternativeName>
        <fullName>Chondromodulin-I-like protein</fullName>
    </alternativeName>
    <alternativeName>
        <fullName>Myodulin</fullName>
    </alternativeName>
    <alternativeName>
        <fullName>Tendin</fullName>
    </alternativeName>
</protein>
<proteinExistence type="evidence at protein level"/>